<organism>
    <name type="scientific">Rickettsia felis (strain ATCC VR-1525 / URRWXCal2)</name>
    <name type="common">Rickettsia azadi</name>
    <dbReference type="NCBI Taxonomy" id="315456"/>
    <lineage>
        <taxon>Bacteria</taxon>
        <taxon>Pseudomonadati</taxon>
        <taxon>Pseudomonadota</taxon>
        <taxon>Alphaproteobacteria</taxon>
        <taxon>Rickettsiales</taxon>
        <taxon>Rickettsiaceae</taxon>
        <taxon>Rickettsieae</taxon>
        <taxon>Rickettsia</taxon>
        <taxon>spotted fever group</taxon>
    </lineage>
</organism>
<evidence type="ECO:0000255" key="1">
    <source>
        <dbReference type="HAMAP-Rule" id="MF_00127"/>
    </source>
</evidence>
<keyword id="KW-0030">Aminoacyl-tRNA synthetase</keyword>
<keyword id="KW-0067">ATP-binding</keyword>
<keyword id="KW-0963">Cytoplasm</keyword>
<keyword id="KW-0436">Ligase</keyword>
<keyword id="KW-0547">Nucleotide-binding</keyword>
<keyword id="KW-0648">Protein biosynthesis</keyword>
<reference key="1">
    <citation type="journal article" date="2005" name="PLoS Biol.">
        <title>The genome sequence of Rickettsia felis identifies the first putative conjugative plasmid in an obligate intracellular parasite.</title>
        <authorList>
            <person name="Ogata H."/>
            <person name="Renesto P."/>
            <person name="Audic S."/>
            <person name="Robert C."/>
            <person name="Blanc G."/>
            <person name="Fournier P.-E."/>
            <person name="Parinello H."/>
            <person name="Claverie J.-M."/>
            <person name="Raoult D."/>
        </authorList>
    </citation>
    <scope>NUCLEOTIDE SEQUENCE [LARGE SCALE GENOMIC DNA]</scope>
    <source>
        <strain>ATCC VR-1525 / URRWXCal2</strain>
    </source>
</reference>
<feature type="chain" id="PRO_0000136239" description="Histidine--tRNA ligase">
    <location>
        <begin position="1"/>
        <end position="415"/>
    </location>
</feature>
<name>SYH_RICFE</name>
<protein>
    <recommendedName>
        <fullName evidence="1">Histidine--tRNA ligase</fullName>
        <ecNumber evidence="1">6.1.1.21</ecNumber>
    </recommendedName>
    <alternativeName>
        <fullName evidence="1">Histidyl-tRNA synthetase</fullName>
        <shortName evidence="1">HisRS</shortName>
    </alternativeName>
</protein>
<accession>Q4UM71</accession>
<sequence length="415" mass="47486">MTEKLQPLRGMKDLLPDDYKVHDYIINKARDVGVLYGYKQMSIPILEYTKVFNRSMGESSDVISKEIYSFLDKSNESVALRPEFTAGIIRSFISNGLQHKLPLKFFSTGPVFRYDRPQAGRQRQFHQLNYEYIGAKGAITDAETLKLAVDILKALEIEQDTILELNSLGCSESRSVYQQKLVEYLNDFKDQLSEESKIRLTKNPMRILDSKSEIDQKIIAAAPILSEYYTDESKEYFEELIKYLDILGVKYVINPRLVRGLDYYCHTAFEFTTKKLGSQSTILAGGRYDGLAKIMGNNDDVPAIGFAAGIERIALMREYNISEVKPVFVLPIGENNICYALEIVDKLRLQNISTIIDPVGKIAKRIQRVLNENAKFIIFIGDEEQANNSLKLKDLEKKEEYIVDFAKVLELLKKY</sequence>
<comment type="catalytic activity">
    <reaction evidence="1">
        <text>tRNA(His) + L-histidine + ATP = L-histidyl-tRNA(His) + AMP + diphosphate + H(+)</text>
        <dbReference type="Rhea" id="RHEA:17313"/>
        <dbReference type="Rhea" id="RHEA-COMP:9665"/>
        <dbReference type="Rhea" id="RHEA-COMP:9689"/>
        <dbReference type="ChEBI" id="CHEBI:15378"/>
        <dbReference type="ChEBI" id="CHEBI:30616"/>
        <dbReference type="ChEBI" id="CHEBI:33019"/>
        <dbReference type="ChEBI" id="CHEBI:57595"/>
        <dbReference type="ChEBI" id="CHEBI:78442"/>
        <dbReference type="ChEBI" id="CHEBI:78527"/>
        <dbReference type="ChEBI" id="CHEBI:456215"/>
        <dbReference type="EC" id="6.1.1.21"/>
    </reaction>
</comment>
<comment type="subunit">
    <text evidence="1">Homodimer.</text>
</comment>
<comment type="subcellular location">
    <subcellularLocation>
        <location evidence="1">Cytoplasm</location>
    </subcellularLocation>
</comment>
<comment type="similarity">
    <text evidence="1">Belongs to the class-II aminoacyl-tRNA synthetase family.</text>
</comment>
<dbReference type="EC" id="6.1.1.21" evidence="1"/>
<dbReference type="EMBL" id="CP000053">
    <property type="protein sequence ID" value="AAY61349.1"/>
    <property type="molecule type" value="Genomic_DNA"/>
</dbReference>
<dbReference type="SMR" id="Q4UM71"/>
<dbReference type="STRING" id="315456.RF_0498"/>
<dbReference type="KEGG" id="rfe:RF_0498"/>
<dbReference type="eggNOG" id="COG0124">
    <property type="taxonomic scope" value="Bacteria"/>
</dbReference>
<dbReference type="HOGENOM" id="CLU_025113_1_0_5"/>
<dbReference type="OrthoDB" id="9800814at2"/>
<dbReference type="Proteomes" id="UP000008548">
    <property type="component" value="Chromosome"/>
</dbReference>
<dbReference type="GO" id="GO:0005737">
    <property type="term" value="C:cytoplasm"/>
    <property type="evidence" value="ECO:0007669"/>
    <property type="project" value="UniProtKB-SubCell"/>
</dbReference>
<dbReference type="GO" id="GO:0005524">
    <property type="term" value="F:ATP binding"/>
    <property type="evidence" value="ECO:0007669"/>
    <property type="project" value="UniProtKB-UniRule"/>
</dbReference>
<dbReference type="GO" id="GO:0004821">
    <property type="term" value="F:histidine-tRNA ligase activity"/>
    <property type="evidence" value="ECO:0007669"/>
    <property type="project" value="UniProtKB-UniRule"/>
</dbReference>
<dbReference type="GO" id="GO:0006427">
    <property type="term" value="P:histidyl-tRNA aminoacylation"/>
    <property type="evidence" value="ECO:0007669"/>
    <property type="project" value="UniProtKB-UniRule"/>
</dbReference>
<dbReference type="CDD" id="cd00773">
    <property type="entry name" value="HisRS-like_core"/>
    <property type="match status" value="1"/>
</dbReference>
<dbReference type="CDD" id="cd00859">
    <property type="entry name" value="HisRS_anticodon"/>
    <property type="match status" value="1"/>
</dbReference>
<dbReference type="Gene3D" id="3.40.50.800">
    <property type="entry name" value="Anticodon-binding domain"/>
    <property type="match status" value="1"/>
</dbReference>
<dbReference type="Gene3D" id="3.30.930.10">
    <property type="entry name" value="Bira Bifunctional Protein, Domain 2"/>
    <property type="match status" value="1"/>
</dbReference>
<dbReference type="HAMAP" id="MF_00127">
    <property type="entry name" value="His_tRNA_synth"/>
    <property type="match status" value="1"/>
</dbReference>
<dbReference type="InterPro" id="IPR006195">
    <property type="entry name" value="aa-tRNA-synth_II"/>
</dbReference>
<dbReference type="InterPro" id="IPR045864">
    <property type="entry name" value="aa-tRNA-synth_II/BPL/LPL"/>
</dbReference>
<dbReference type="InterPro" id="IPR004154">
    <property type="entry name" value="Anticodon-bd"/>
</dbReference>
<dbReference type="InterPro" id="IPR036621">
    <property type="entry name" value="Anticodon-bd_dom_sf"/>
</dbReference>
<dbReference type="InterPro" id="IPR015807">
    <property type="entry name" value="His-tRNA-ligase"/>
</dbReference>
<dbReference type="InterPro" id="IPR041715">
    <property type="entry name" value="HisRS-like_core"/>
</dbReference>
<dbReference type="InterPro" id="IPR004516">
    <property type="entry name" value="HisRS/HisZ"/>
</dbReference>
<dbReference type="InterPro" id="IPR033656">
    <property type="entry name" value="HisRS_anticodon"/>
</dbReference>
<dbReference type="NCBIfam" id="TIGR00442">
    <property type="entry name" value="hisS"/>
    <property type="match status" value="1"/>
</dbReference>
<dbReference type="PANTHER" id="PTHR43707:SF1">
    <property type="entry name" value="HISTIDINE--TRNA LIGASE, MITOCHONDRIAL-RELATED"/>
    <property type="match status" value="1"/>
</dbReference>
<dbReference type="PANTHER" id="PTHR43707">
    <property type="entry name" value="HISTIDYL-TRNA SYNTHETASE"/>
    <property type="match status" value="1"/>
</dbReference>
<dbReference type="Pfam" id="PF03129">
    <property type="entry name" value="HGTP_anticodon"/>
    <property type="match status" value="1"/>
</dbReference>
<dbReference type="Pfam" id="PF13393">
    <property type="entry name" value="tRNA-synt_His"/>
    <property type="match status" value="1"/>
</dbReference>
<dbReference type="PIRSF" id="PIRSF001549">
    <property type="entry name" value="His-tRNA_synth"/>
    <property type="match status" value="1"/>
</dbReference>
<dbReference type="SUPFAM" id="SSF52954">
    <property type="entry name" value="Class II aaRS ABD-related"/>
    <property type="match status" value="1"/>
</dbReference>
<dbReference type="SUPFAM" id="SSF55681">
    <property type="entry name" value="Class II aaRS and biotin synthetases"/>
    <property type="match status" value="1"/>
</dbReference>
<dbReference type="PROSITE" id="PS50862">
    <property type="entry name" value="AA_TRNA_LIGASE_II"/>
    <property type="match status" value="1"/>
</dbReference>
<gene>
    <name evidence="1" type="primary">hisS</name>
    <name type="ordered locus">RF_0498</name>
</gene>
<proteinExistence type="inferred from homology"/>